<dbReference type="EMBL" id="CP001033">
    <property type="protein sequence ID" value="ACB90138.1"/>
    <property type="molecule type" value="Genomic_DNA"/>
</dbReference>
<dbReference type="RefSeq" id="WP_000778585.1">
    <property type="nucleotide sequence ID" value="NC_010582.1"/>
</dbReference>
<dbReference type="KEGG" id="spw:SPCG_0886"/>
<dbReference type="HOGENOM" id="CLU_123820_0_0_9"/>
<dbReference type="GO" id="GO:0005737">
    <property type="term" value="C:cytoplasm"/>
    <property type="evidence" value="ECO:0007669"/>
    <property type="project" value="UniProtKB-SubCell"/>
</dbReference>
<dbReference type="GO" id="GO:0008270">
    <property type="term" value="F:zinc ion binding"/>
    <property type="evidence" value="ECO:0007669"/>
    <property type="project" value="UniProtKB-UniRule"/>
</dbReference>
<dbReference type="GO" id="GO:0006950">
    <property type="term" value="P:response to stress"/>
    <property type="evidence" value="ECO:0007669"/>
    <property type="project" value="UniProtKB-ARBA"/>
</dbReference>
<dbReference type="HAMAP" id="MF_00745">
    <property type="entry name" value="SprT_like"/>
    <property type="match status" value="1"/>
</dbReference>
<dbReference type="InterPro" id="IPR006640">
    <property type="entry name" value="SprT-like_domain"/>
</dbReference>
<dbReference type="InterPro" id="IPR035240">
    <property type="entry name" value="SprT_Zn_ribbon"/>
</dbReference>
<dbReference type="InterPro" id="IPR023524">
    <property type="entry name" value="Uncharacterised_SprT-like"/>
</dbReference>
<dbReference type="NCBIfam" id="NF003339">
    <property type="entry name" value="PRK04351.1"/>
    <property type="match status" value="1"/>
</dbReference>
<dbReference type="Pfam" id="PF10263">
    <property type="entry name" value="SprT-like"/>
    <property type="match status" value="1"/>
</dbReference>
<dbReference type="Pfam" id="PF17283">
    <property type="entry name" value="Zn_ribbon_SprT"/>
    <property type="match status" value="1"/>
</dbReference>
<dbReference type="SMART" id="SM00731">
    <property type="entry name" value="SprT"/>
    <property type="match status" value="1"/>
</dbReference>
<accession>B2IP67</accession>
<gene>
    <name type="ordered locus">SPCG_0886</name>
</gene>
<name>SPRTL_STRPS</name>
<evidence type="ECO:0000255" key="1">
    <source>
        <dbReference type="HAMAP-Rule" id="MF_00745"/>
    </source>
</evidence>
<protein>
    <recommendedName>
        <fullName evidence="1">Protein SprT-like</fullName>
    </recommendedName>
</protein>
<reference key="1">
    <citation type="journal article" date="2009" name="BMC Genomics">
        <title>Genome evolution driven by host adaptations results in a more virulent and antimicrobial-resistant Streptococcus pneumoniae serotype 14.</title>
        <authorList>
            <person name="Ding F."/>
            <person name="Tang P."/>
            <person name="Hsu M.-H."/>
            <person name="Cui P."/>
            <person name="Hu S."/>
            <person name="Yu J."/>
            <person name="Chiu C.-H."/>
        </authorList>
    </citation>
    <scope>NUCLEOTIDE SEQUENCE [LARGE SCALE GENOMIC DNA]</scope>
    <source>
        <strain>CGSP14</strain>
    </source>
</reference>
<organism>
    <name type="scientific">Streptococcus pneumoniae (strain CGSP14)</name>
    <dbReference type="NCBI Taxonomy" id="516950"/>
    <lineage>
        <taxon>Bacteria</taxon>
        <taxon>Bacillati</taxon>
        <taxon>Bacillota</taxon>
        <taxon>Bacilli</taxon>
        <taxon>Lactobacillales</taxon>
        <taxon>Streptococcaceae</taxon>
        <taxon>Streptococcus</taxon>
    </lineage>
</organism>
<proteinExistence type="inferred from homology"/>
<sequence>MKLTDYVKQVSLEDFGRPFIHHVQWNRRLRSTGGRFFPKDGHLDFNPKVYQELGLDVFRKIVRHELCHYHLYFQGKGYQHKDRDFKELLKAVDGLRFVPSLPNSNSKPIKLYRCQSCQQRYQRKRRIDTQRYRCGLCRGKLLLVNQPED</sequence>
<keyword id="KW-0963">Cytoplasm</keyword>
<keyword id="KW-0479">Metal-binding</keyword>
<keyword id="KW-0862">Zinc</keyword>
<feature type="chain" id="PRO_1000133234" description="Protein SprT-like">
    <location>
        <begin position="1"/>
        <end position="149"/>
    </location>
</feature>
<feature type="domain" description="SprT-like" evidence="1">
    <location>
        <begin position="4"/>
        <end position="144"/>
    </location>
</feature>
<feature type="active site" evidence="1">
    <location>
        <position position="65"/>
    </location>
</feature>
<feature type="binding site" evidence="1">
    <location>
        <position position="64"/>
    </location>
    <ligand>
        <name>Zn(2+)</name>
        <dbReference type="ChEBI" id="CHEBI:29105"/>
    </ligand>
</feature>
<feature type="binding site" evidence="1">
    <location>
        <position position="68"/>
    </location>
    <ligand>
        <name>Zn(2+)</name>
        <dbReference type="ChEBI" id="CHEBI:29105"/>
    </ligand>
</feature>
<comment type="cofactor">
    <cofactor evidence="1">
        <name>Zn(2+)</name>
        <dbReference type="ChEBI" id="CHEBI:29105"/>
    </cofactor>
    <text evidence="1">Binds 1 zinc ion.</text>
</comment>
<comment type="subcellular location">
    <subcellularLocation>
        <location evidence="1">Cytoplasm</location>
    </subcellularLocation>
</comment>
<comment type="similarity">
    <text evidence="1">Belongs to the SprT family.</text>
</comment>